<accession>Q06GR1</accession>
<evidence type="ECO:0000255" key="1">
    <source>
        <dbReference type="HAMAP-Rule" id="MF_00482"/>
    </source>
</evidence>
<gene>
    <name evidence="1" type="primary">psaB</name>
</gene>
<name>PSAB_PIPCE</name>
<reference key="1">
    <citation type="journal article" date="2006" name="BMC Evol. Biol.">
        <title>Complete plastid genome sequences of Drimys, Liriodendron, and Piper: implications for the phylogenetic relationships of magnoliids.</title>
        <authorList>
            <person name="Cai Z."/>
            <person name="Penaflor C."/>
            <person name="Kuehl J.V."/>
            <person name="Leebens-Mack J."/>
            <person name="Carlson J.E."/>
            <person name="dePamphilis C.W."/>
            <person name="Boore J.L."/>
            <person name="Jansen R.K."/>
        </authorList>
    </citation>
    <scope>NUCLEOTIDE SEQUENCE [LARGE SCALE GENOMIC DNA]</scope>
</reference>
<dbReference type="EC" id="1.97.1.12" evidence="1"/>
<dbReference type="EMBL" id="DQ887677">
    <property type="protein sequence ID" value="ABI14471.1"/>
    <property type="molecule type" value="Genomic_DNA"/>
</dbReference>
<dbReference type="RefSeq" id="YP_784472.1">
    <property type="nucleotide sequence ID" value="NC_008457.1"/>
</dbReference>
<dbReference type="SMR" id="Q06GR1"/>
<dbReference type="GeneID" id="4363735"/>
<dbReference type="GO" id="GO:0009535">
    <property type="term" value="C:chloroplast thylakoid membrane"/>
    <property type="evidence" value="ECO:0007669"/>
    <property type="project" value="UniProtKB-SubCell"/>
</dbReference>
<dbReference type="GO" id="GO:0009522">
    <property type="term" value="C:photosystem I"/>
    <property type="evidence" value="ECO:0007669"/>
    <property type="project" value="UniProtKB-KW"/>
</dbReference>
<dbReference type="GO" id="GO:0051539">
    <property type="term" value="F:4 iron, 4 sulfur cluster binding"/>
    <property type="evidence" value="ECO:0007669"/>
    <property type="project" value="UniProtKB-KW"/>
</dbReference>
<dbReference type="GO" id="GO:0016168">
    <property type="term" value="F:chlorophyll binding"/>
    <property type="evidence" value="ECO:0007669"/>
    <property type="project" value="UniProtKB-KW"/>
</dbReference>
<dbReference type="GO" id="GO:0009055">
    <property type="term" value="F:electron transfer activity"/>
    <property type="evidence" value="ECO:0007669"/>
    <property type="project" value="UniProtKB-UniRule"/>
</dbReference>
<dbReference type="GO" id="GO:0000287">
    <property type="term" value="F:magnesium ion binding"/>
    <property type="evidence" value="ECO:0007669"/>
    <property type="project" value="UniProtKB-UniRule"/>
</dbReference>
<dbReference type="GO" id="GO:0016491">
    <property type="term" value="F:oxidoreductase activity"/>
    <property type="evidence" value="ECO:0007669"/>
    <property type="project" value="UniProtKB-KW"/>
</dbReference>
<dbReference type="GO" id="GO:0015979">
    <property type="term" value="P:photosynthesis"/>
    <property type="evidence" value="ECO:0007669"/>
    <property type="project" value="UniProtKB-UniRule"/>
</dbReference>
<dbReference type="FunFam" id="1.20.1130.10:FF:000001">
    <property type="entry name" value="Photosystem I P700 chlorophyll a apoprotein A2"/>
    <property type="match status" value="1"/>
</dbReference>
<dbReference type="Gene3D" id="1.20.1130.10">
    <property type="entry name" value="Photosystem I PsaA/PsaB"/>
    <property type="match status" value="1"/>
</dbReference>
<dbReference type="HAMAP" id="MF_00482">
    <property type="entry name" value="PSI_PsaB"/>
    <property type="match status" value="1"/>
</dbReference>
<dbReference type="InterPro" id="IPR001280">
    <property type="entry name" value="PSI_PsaA/B"/>
</dbReference>
<dbReference type="InterPro" id="IPR020586">
    <property type="entry name" value="PSI_PsaA/B_CS"/>
</dbReference>
<dbReference type="InterPro" id="IPR036408">
    <property type="entry name" value="PSI_PsaA/B_sf"/>
</dbReference>
<dbReference type="InterPro" id="IPR006244">
    <property type="entry name" value="PSI_PsaB"/>
</dbReference>
<dbReference type="NCBIfam" id="TIGR01336">
    <property type="entry name" value="psaB"/>
    <property type="match status" value="1"/>
</dbReference>
<dbReference type="PANTHER" id="PTHR30128">
    <property type="entry name" value="OUTER MEMBRANE PROTEIN, OMPA-RELATED"/>
    <property type="match status" value="1"/>
</dbReference>
<dbReference type="PANTHER" id="PTHR30128:SF19">
    <property type="entry name" value="PHOTOSYSTEM I P700 CHLOROPHYLL A APOPROTEIN A1-RELATED"/>
    <property type="match status" value="1"/>
</dbReference>
<dbReference type="Pfam" id="PF00223">
    <property type="entry name" value="PsaA_PsaB"/>
    <property type="match status" value="1"/>
</dbReference>
<dbReference type="PIRSF" id="PIRSF002905">
    <property type="entry name" value="PSI_A"/>
    <property type="match status" value="1"/>
</dbReference>
<dbReference type="PRINTS" id="PR00257">
    <property type="entry name" value="PHOTSYSPSAAB"/>
</dbReference>
<dbReference type="SUPFAM" id="SSF81558">
    <property type="entry name" value="Photosystem I subunits PsaA/PsaB"/>
    <property type="match status" value="1"/>
</dbReference>
<dbReference type="PROSITE" id="PS00419">
    <property type="entry name" value="PHOTOSYSTEM_I_PSAAB"/>
    <property type="match status" value="1"/>
</dbReference>
<sequence>MALRFPRFSQGLAQDPTTRRIWFGIATAHDFESHDDITEERLYQNIFASHFGQLAIIFLWTSGNLFHVAWQGNFESWVKDPLHVRPIAHAIWDPHFGQPAVEAFTRGGAFGPVNISYSGVYQWWYTIGLRTNEDLYTGALFLLFLSAISLVAGWLHLQPKWKPSVSWFKNAESRLNHHLSGLFGVSSLAWTGHLVHVAIPGSRGEYVRWNNFLDVLPYPQGLTPLFTGQWNLYAQNPDSGSHLFGTSQGSGTAILTLLGGFHPQTQSLWLTDIAHHHLAIAFIFLVAGHMYRTNFGIGHSMKDLLEAHTPPGGRLGRGHKGLYDTINNSLHFQLGLALASLGVITSLVAQHMYSLPAYAFIAQDFTSQAALYTHHQYIAGFIMTGAFAHGAIFFIRDYNPEQNEDNVLARMLDHKEAIISHLSWASLFLGFHTLGLYVHNDVMLAFGTPEKQILIEPIFAQWIQSAHGKTSYGFDILLSSTNGPAFNAGRSIWLPGWLSAVNDNSNSLFLTIGPGDFLVHHAIALGLHTTTLILVKGALDARGSKLMPDKKDFGYSFPCDGPGRGGTCDISAWDAFYLAVFWMLNTIGWVTFYWHWKHITLWQGNVSQFNESSTYLMGWLRDYLWLNSSQLINGYNPFGMNSLSVWAWMFLFGHLVWATGFMFLISWRGYWQELIETLAWAHERTPLANLIRWRDKPVALSIVQARLVGLAHFSVGYIFTYAAFLIASTSGKFG</sequence>
<protein>
    <recommendedName>
        <fullName evidence="1">Photosystem I P700 chlorophyll a apoprotein A2</fullName>
        <ecNumber evidence="1">1.97.1.12</ecNumber>
    </recommendedName>
    <alternativeName>
        <fullName evidence="1">PSI-B</fullName>
    </alternativeName>
    <alternativeName>
        <fullName evidence="1">PsaB</fullName>
    </alternativeName>
</protein>
<geneLocation type="chloroplast"/>
<feature type="chain" id="PRO_0000277128" description="Photosystem I P700 chlorophyll a apoprotein A2">
    <location>
        <begin position="1"/>
        <end position="734"/>
    </location>
</feature>
<feature type="transmembrane region" description="Helical; Name=I" evidence="1">
    <location>
        <begin position="46"/>
        <end position="69"/>
    </location>
</feature>
<feature type="transmembrane region" description="Helical; Name=II" evidence="1">
    <location>
        <begin position="135"/>
        <end position="158"/>
    </location>
</feature>
<feature type="transmembrane region" description="Helical; Name=III" evidence="1">
    <location>
        <begin position="175"/>
        <end position="199"/>
    </location>
</feature>
<feature type="transmembrane region" description="Helical; Name=IV" evidence="1">
    <location>
        <begin position="273"/>
        <end position="291"/>
    </location>
</feature>
<feature type="transmembrane region" description="Helical; Name=V" evidence="1">
    <location>
        <begin position="330"/>
        <end position="353"/>
    </location>
</feature>
<feature type="transmembrane region" description="Helical; Name=VI" evidence="1">
    <location>
        <begin position="369"/>
        <end position="395"/>
    </location>
</feature>
<feature type="transmembrane region" description="Helical; Name=VII" evidence="1">
    <location>
        <begin position="417"/>
        <end position="439"/>
    </location>
</feature>
<feature type="transmembrane region" description="Helical; Name=VIII" evidence="1">
    <location>
        <begin position="517"/>
        <end position="535"/>
    </location>
</feature>
<feature type="transmembrane region" description="Helical; Name=IX" evidence="1">
    <location>
        <begin position="575"/>
        <end position="596"/>
    </location>
</feature>
<feature type="transmembrane region" description="Helical; Name=X" evidence="1">
    <location>
        <begin position="643"/>
        <end position="665"/>
    </location>
</feature>
<feature type="transmembrane region" description="Helical; Name=XI" evidence="1">
    <location>
        <begin position="707"/>
        <end position="727"/>
    </location>
</feature>
<feature type="binding site" evidence="1">
    <location>
        <position position="559"/>
    </location>
    <ligand>
        <name>[4Fe-4S] cluster</name>
        <dbReference type="ChEBI" id="CHEBI:49883"/>
        <note>ligand shared between dimeric partners</note>
    </ligand>
</feature>
<feature type="binding site" evidence="1">
    <location>
        <position position="568"/>
    </location>
    <ligand>
        <name>[4Fe-4S] cluster</name>
        <dbReference type="ChEBI" id="CHEBI:49883"/>
        <note>ligand shared between dimeric partners</note>
    </ligand>
</feature>
<feature type="binding site" description="axial binding residue" evidence="1">
    <location>
        <position position="654"/>
    </location>
    <ligand>
        <name>chlorophyll a</name>
        <dbReference type="ChEBI" id="CHEBI:58416"/>
        <label>B1</label>
    </ligand>
    <ligandPart>
        <name>Mg</name>
        <dbReference type="ChEBI" id="CHEBI:25107"/>
    </ligandPart>
</feature>
<feature type="binding site" description="axial binding residue" evidence="1">
    <location>
        <position position="662"/>
    </location>
    <ligand>
        <name>chlorophyll a</name>
        <dbReference type="ChEBI" id="CHEBI:58416"/>
        <label>B3</label>
    </ligand>
    <ligandPart>
        <name>Mg</name>
        <dbReference type="ChEBI" id="CHEBI:25107"/>
    </ligandPart>
</feature>
<feature type="binding site" evidence="1">
    <location>
        <position position="670"/>
    </location>
    <ligand>
        <name>chlorophyll a</name>
        <dbReference type="ChEBI" id="CHEBI:58416"/>
        <label>B3</label>
    </ligand>
</feature>
<feature type="binding site" evidence="1">
    <location>
        <position position="671"/>
    </location>
    <ligand>
        <name>phylloquinone</name>
        <dbReference type="ChEBI" id="CHEBI:18067"/>
        <label>B</label>
    </ligand>
</feature>
<keyword id="KW-0004">4Fe-4S</keyword>
<keyword id="KW-0148">Chlorophyll</keyword>
<keyword id="KW-0150">Chloroplast</keyword>
<keyword id="KW-0157">Chromophore</keyword>
<keyword id="KW-0249">Electron transport</keyword>
<keyword id="KW-0408">Iron</keyword>
<keyword id="KW-0411">Iron-sulfur</keyword>
<keyword id="KW-0460">Magnesium</keyword>
<keyword id="KW-0472">Membrane</keyword>
<keyword id="KW-0479">Metal-binding</keyword>
<keyword id="KW-0560">Oxidoreductase</keyword>
<keyword id="KW-0602">Photosynthesis</keyword>
<keyword id="KW-0603">Photosystem I</keyword>
<keyword id="KW-0934">Plastid</keyword>
<keyword id="KW-0793">Thylakoid</keyword>
<keyword id="KW-0812">Transmembrane</keyword>
<keyword id="KW-1133">Transmembrane helix</keyword>
<keyword id="KW-0813">Transport</keyword>
<comment type="function">
    <text evidence="1">PsaA and PsaB bind P700, the primary electron donor of photosystem I (PSI), as well as the electron acceptors A0, A1 and FX. PSI is a plastocyanin-ferredoxin oxidoreductase, converting photonic excitation into a charge separation, which transfers an electron from the donor P700 chlorophyll pair to the spectroscopically characterized acceptors A0, A1, FX, FA and FB in turn. Oxidized P700 is reduced on the lumenal side of the thylakoid membrane by plastocyanin.</text>
</comment>
<comment type="catalytic activity">
    <reaction evidence="1">
        <text>reduced [plastocyanin] + hnu + oxidized [2Fe-2S]-[ferredoxin] = oxidized [plastocyanin] + reduced [2Fe-2S]-[ferredoxin]</text>
        <dbReference type="Rhea" id="RHEA:30407"/>
        <dbReference type="Rhea" id="RHEA-COMP:10000"/>
        <dbReference type="Rhea" id="RHEA-COMP:10001"/>
        <dbReference type="Rhea" id="RHEA-COMP:10039"/>
        <dbReference type="Rhea" id="RHEA-COMP:10040"/>
        <dbReference type="ChEBI" id="CHEBI:29036"/>
        <dbReference type="ChEBI" id="CHEBI:30212"/>
        <dbReference type="ChEBI" id="CHEBI:33737"/>
        <dbReference type="ChEBI" id="CHEBI:33738"/>
        <dbReference type="ChEBI" id="CHEBI:49552"/>
        <dbReference type="EC" id="1.97.1.12"/>
    </reaction>
</comment>
<comment type="cofactor">
    <text evidence="1">P700 is a chlorophyll a/chlorophyll a' dimer, A0 is one or more chlorophyll a, A1 is one or both phylloquinones and FX is a shared 4Fe-4S iron-sulfur center.</text>
</comment>
<comment type="subunit">
    <text evidence="1">The PsaA/B heterodimer binds the P700 chlorophyll special pair and subsequent electron acceptors. PSI consists of a core antenna complex that captures photons, and an electron transfer chain that converts photonic excitation into a charge separation. The eukaryotic PSI reaction center is composed of at least 11 subunits.</text>
</comment>
<comment type="subcellular location">
    <subcellularLocation>
        <location>Plastid</location>
        <location>Chloroplast thylakoid membrane</location>
        <topology>Multi-pass membrane protein</topology>
    </subcellularLocation>
</comment>
<comment type="similarity">
    <text evidence="1">Belongs to the PsaA/PsaB family.</text>
</comment>
<proteinExistence type="inferred from homology"/>
<organism>
    <name type="scientific">Piper cenocladum</name>
    <name type="common">Ant piper</name>
    <dbReference type="NCBI Taxonomy" id="398741"/>
    <lineage>
        <taxon>Eukaryota</taxon>
        <taxon>Viridiplantae</taxon>
        <taxon>Streptophyta</taxon>
        <taxon>Embryophyta</taxon>
        <taxon>Tracheophyta</taxon>
        <taxon>Spermatophyta</taxon>
        <taxon>Magnoliopsida</taxon>
        <taxon>Magnoliidae</taxon>
        <taxon>Piperales</taxon>
        <taxon>Piperaceae</taxon>
        <taxon>Piper</taxon>
    </lineage>
</organism>